<feature type="chain" id="PRO_0000329832" description="Polyribonucleotide nucleotidyltransferase">
    <location>
        <begin position="1"/>
        <end position="711"/>
    </location>
</feature>
<feature type="domain" description="KH" evidence="1">
    <location>
        <begin position="553"/>
        <end position="612"/>
    </location>
</feature>
<feature type="domain" description="S1 motif" evidence="1">
    <location>
        <begin position="622"/>
        <end position="690"/>
    </location>
</feature>
<feature type="region of interest" description="Disordered" evidence="2">
    <location>
        <begin position="690"/>
        <end position="711"/>
    </location>
</feature>
<feature type="compositionally biased region" description="Low complexity" evidence="2">
    <location>
        <begin position="694"/>
        <end position="711"/>
    </location>
</feature>
<feature type="binding site" evidence="1">
    <location>
        <position position="486"/>
    </location>
    <ligand>
        <name>Mg(2+)</name>
        <dbReference type="ChEBI" id="CHEBI:18420"/>
    </ligand>
</feature>
<feature type="binding site" evidence="1">
    <location>
        <position position="492"/>
    </location>
    <ligand>
        <name>Mg(2+)</name>
        <dbReference type="ChEBI" id="CHEBI:18420"/>
    </ligand>
</feature>
<name>PNP_SALPB</name>
<keyword id="KW-0963">Cytoplasm</keyword>
<keyword id="KW-0460">Magnesium</keyword>
<keyword id="KW-0479">Metal-binding</keyword>
<keyword id="KW-0548">Nucleotidyltransferase</keyword>
<keyword id="KW-0694">RNA-binding</keyword>
<keyword id="KW-0808">Transferase</keyword>
<comment type="function">
    <text evidence="1">Involved in mRNA degradation. Catalyzes the phosphorolysis of single-stranded polyribonucleotides processively in the 3'- to 5'-direction.</text>
</comment>
<comment type="catalytic activity">
    <reaction evidence="1">
        <text>RNA(n+1) + phosphate = RNA(n) + a ribonucleoside 5'-diphosphate</text>
        <dbReference type="Rhea" id="RHEA:22096"/>
        <dbReference type="Rhea" id="RHEA-COMP:14527"/>
        <dbReference type="Rhea" id="RHEA-COMP:17342"/>
        <dbReference type="ChEBI" id="CHEBI:43474"/>
        <dbReference type="ChEBI" id="CHEBI:57930"/>
        <dbReference type="ChEBI" id="CHEBI:140395"/>
        <dbReference type="EC" id="2.7.7.8"/>
    </reaction>
</comment>
<comment type="cofactor">
    <cofactor evidence="1">
        <name>Mg(2+)</name>
        <dbReference type="ChEBI" id="CHEBI:18420"/>
    </cofactor>
</comment>
<comment type="subunit">
    <text evidence="1">Component of the RNA degradosome, which is a multiprotein complex involved in RNA processing and mRNA degradation.</text>
</comment>
<comment type="subcellular location">
    <subcellularLocation>
        <location evidence="1">Cytoplasm</location>
    </subcellularLocation>
</comment>
<comment type="similarity">
    <text evidence="1">Belongs to the polyribonucleotide nucleotidyltransferase family.</text>
</comment>
<comment type="sequence caution" evidence="3">
    <conflict type="erroneous initiation">
        <sequence resource="EMBL-CDS" id="ABX69420"/>
    </conflict>
</comment>
<dbReference type="EC" id="2.7.7.8" evidence="1"/>
<dbReference type="EMBL" id="CP000886">
    <property type="protein sequence ID" value="ABX69420.1"/>
    <property type="status" value="ALT_INIT"/>
    <property type="molecule type" value="Genomic_DNA"/>
</dbReference>
<dbReference type="RefSeq" id="WP_001670767.1">
    <property type="nucleotide sequence ID" value="NC_010102.1"/>
</dbReference>
<dbReference type="SMR" id="A9N728"/>
<dbReference type="KEGG" id="spq:SPAB_04093"/>
<dbReference type="PATRIC" id="fig|1016998.12.peg.3857"/>
<dbReference type="HOGENOM" id="CLU_004217_2_2_6"/>
<dbReference type="BioCyc" id="SENT1016998:SPAB_RS16630-MONOMER"/>
<dbReference type="Proteomes" id="UP000008556">
    <property type="component" value="Chromosome"/>
</dbReference>
<dbReference type="GO" id="GO:0005829">
    <property type="term" value="C:cytosol"/>
    <property type="evidence" value="ECO:0007669"/>
    <property type="project" value="TreeGrafter"/>
</dbReference>
<dbReference type="GO" id="GO:0000175">
    <property type="term" value="F:3'-5'-RNA exonuclease activity"/>
    <property type="evidence" value="ECO:0007669"/>
    <property type="project" value="TreeGrafter"/>
</dbReference>
<dbReference type="GO" id="GO:0000287">
    <property type="term" value="F:magnesium ion binding"/>
    <property type="evidence" value="ECO:0007669"/>
    <property type="project" value="UniProtKB-UniRule"/>
</dbReference>
<dbReference type="GO" id="GO:0004654">
    <property type="term" value="F:polyribonucleotide nucleotidyltransferase activity"/>
    <property type="evidence" value="ECO:0007669"/>
    <property type="project" value="UniProtKB-UniRule"/>
</dbReference>
<dbReference type="GO" id="GO:0003723">
    <property type="term" value="F:RNA binding"/>
    <property type="evidence" value="ECO:0007669"/>
    <property type="project" value="UniProtKB-UniRule"/>
</dbReference>
<dbReference type="GO" id="GO:0006402">
    <property type="term" value="P:mRNA catabolic process"/>
    <property type="evidence" value="ECO:0007669"/>
    <property type="project" value="UniProtKB-UniRule"/>
</dbReference>
<dbReference type="GO" id="GO:0006396">
    <property type="term" value="P:RNA processing"/>
    <property type="evidence" value="ECO:0007669"/>
    <property type="project" value="InterPro"/>
</dbReference>
<dbReference type="CDD" id="cd02393">
    <property type="entry name" value="KH-I_PNPase"/>
    <property type="match status" value="1"/>
</dbReference>
<dbReference type="CDD" id="cd11363">
    <property type="entry name" value="RNase_PH_PNPase_1"/>
    <property type="match status" value="1"/>
</dbReference>
<dbReference type="CDD" id="cd11364">
    <property type="entry name" value="RNase_PH_PNPase_2"/>
    <property type="match status" value="1"/>
</dbReference>
<dbReference type="CDD" id="cd04472">
    <property type="entry name" value="S1_PNPase"/>
    <property type="match status" value="1"/>
</dbReference>
<dbReference type="FunFam" id="2.40.50.140:FF:000023">
    <property type="entry name" value="Polyribonucleotide nucleotidyltransferase"/>
    <property type="match status" value="1"/>
</dbReference>
<dbReference type="FunFam" id="3.30.1370.10:FF:000001">
    <property type="entry name" value="Polyribonucleotide nucleotidyltransferase"/>
    <property type="match status" value="1"/>
</dbReference>
<dbReference type="FunFam" id="3.30.230.70:FF:000001">
    <property type="entry name" value="Polyribonucleotide nucleotidyltransferase"/>
    <property type="match status" value="1"/>
</dbReference>
<dbReference type="FunFam" id="3.30.230.70:FF:000002">
    <property type="entry name" value="Polyribonucleotide nucleotidyltransferase"/>
    <property type="match status" value="1"/>
</dbReference>
<dbReference type="Gene3D" id="3.30.230.70">
    <property type="entry name" value="GHMP Kinase, N-terminal domain"/>
    <property type="match status" value="2"/>
</dbReference>
<dbReference type="Gene3D" id="3.30.1370.10">
    <property type="entry name" value="K Homology domain, type 1"/>
    <property type="match status" value="1"/>
</dbReference>
<dbReference type="Gene3D" id="2.40.50.140">
    <property type="entry name" value="Nucleic acid-binding proteins"/>
    <property type="match status" value="1"/>
</dbReference>
<dbReference type="HAMAP" id="MF_01595">
    <property type="entry name" value="PNPase"/>
    <property type="match status" value="1"/>
</dbReference>
<dbReference type="InterPro" id="IPR001247">
    <property type="entry name" value="ExoRNase_PH_dom1"/>
</dbReference>
<dbReference type="InterPro" id="IPR015847">
    <property type="entry name" value="ExoRNase_PH_dom2"/>
</dbReference>
<dbReference type="InterPro" id="IPR036345">
    <property type="entry name" value="ExoRNase_PH_dom2_sf"/>
</dbReference>
<dbReference type="InterPro" id="IPR004087">
    <property type="entry name" value="KH_dom"/>
</dbReference>
<dbReference type="InterPro" id="IPR004088">
    <property type="entry name" value="KH_dom_type_1"/>
</dbReference>
<dbReference type="InterPro" id="IPR036612">
    <property type="entry name" value="KH_dom_type_1_sf"/>
</dbReference>
<dbReference type="InterPro" id="IPR012340">
    <property type="entry name" value="NA-bd_OB-fold"/>
</dbReference>
<dbReference type="InterPro" id="IPR012162">
    <property type="entry name" value="PNPase"/>
</dbReference>
<dbReference type="InterPro" id="IPR027408">
    <property type="entry name" value="PNPase/RNase_PH_dom_sf"/>
</dbReference>
<dbReference type="InterPro" id="IPR015848">
    <property type="entry name" value="PNPase_PH_RNA-bd_bac/org-type"/>
</dbReference>
<dbReference type="InterPro" id="IPR036456">
    <property type="entry name" value="PNPase_PH_RNA-bd_sf"/>
</dbReference>
<dbReference type="InterPro" id="IPR020568">
    <property type="entry name" value="Ribosomal_Su5_D2-typ_SF"/>
</dbReference>
<dbReference type="InterPro" id="IPR003029">
    <property type="entry name" value="S1_domain"/>
</dbReference>
<dbReference type="NCBIfam" id="TIGR03591">
    <property type="entry name" value="polynuc_phos"/>
    <property type="match status" value="1"/>
</dbReference>
<dbReference type="NCBIfam" id="NF008805">
    <property type="entry name" value="PRK11824.1"/>
    <property type="match status" value="1"/>
</dbReference>
<dbReference type="PANTHER" id="PTHR11252">
    <property type="entry name" value="POLYRIBONUCLEOTIDE NUCLEOTIDYLTRANSFERASE"/>
    <property type="match status" value="1"/>
</dbReference>
<dbReference type="PANTHER" id="PTHR11252:SF0">
    <property type="entry name" value="POLYRIBONUCLEOTIDE NUCLEOTIDYLTRANSFERASE 1, MITOCHONDRIAL"/>
    <property type="match status" value="1"/>
</dbReference>
<dbReference type="Pfam" id="PF00013">
    <property type="entry name" value="KH_1"/>
    <property type="match status" value="1"/>
</dbReference>
<dbReference type="Pfam" id="PF03726">
    <property type="entry name" value="PNPase"/>
    <property type="match status" value="1"/>
</dbReference>
<dbReference type="Pfam" id="PF01138">
    <property type="entry name" value="RNase_PH"/>
    <property type="match status" value="2"/>
</dbReference>
<dbReference type="Pfam" id="PF03725">
    <property type="entry name" value="RNase_PH_C"/>
    <property type="match status" value="2"/>
</dbReference>
<dbReference type="Pfam" id="PF00575">
    <property type="entry name" value="S1"/>
    <property type="match status" value="1"/>
</dbReference>
<dbReference type="PIRSF" id="PIRSF005499">
    <property type="entry name" value="PNPase"/>
    <property type="match status" value="1"/>
</dbReference>
<dbReference type="SMART" id="SM00322">
    <property type="entry name" value="KH"/>
    <property type="match status" value="1"/>
</dbReference>
<dbReference type="SMART" id="SM00316">
    <property type="entry name" value="S1"/>
    <property type="match status" value="1"/>
</dbReference>
<dbReference type="SUPFAM" id="SSF54791">
    <property type="entry name" value="Eukaryotic type KH-domain (KH-domain type I)"/>
    <property type="match status" value="1"/>
</dbReference>
<dbReference type="SUPFAM" id="SSF50249">
    <property type="entry name" value="Nucleic acid-binding proteins"/>
    <property type="match status" value="1"/>
</dbReference>
<dbReference type="SUPFAM" id="SSF46915">
    <property type="entry name" value="Polynucleotide phosphorylase/guanosine pentaphosphate synthase (PNPase/GPSI), domain 3"/>
    <property type="match status" value="1"/>
</dbReference>
<dbReference type="SUPFAM" id="SSF55666">
    <property type="entry name" value="Ribonuclease PH domain 2-like"/>
    <property type="match status" value="2"/>
</dbReference>
<dbReference type="SUPFAM" id="SSF54211">
    <property type="entry name" value="Ribosomal protein S5 domain 2-like"/>
    <property type="match status" value="2"/>
</dbReference>
<dbReference type="PROSITE" id="PS50084">
    <property type="entry name" value="KH_TYPE_1"/>
    <property type="match status" value="1"/>
</dbReference>
<dbReference type="PROSITE" id="PS50126">
    <property type="entry name" value="S1"/>
    <property type="match status" value="1"/>
</dbReference>
<protein>
    <recommendedName>
        <fullName evidence="1">Polyribonucleotide nucleotidyltransferase</fullName>
        <ecNumber evidence="1">2.7.7.8</ecNumber>
    </recommendedName>
    <alternativeName>
        <fullName evidence="1">Polynucleotide phosphorylase</fullName>
        <shortName evidence="1">PNPase</shortName>
    </alternativeName>
</protein>
<organism>
    <name type="scientific">Salmonella paratyphi B (strain ATCC BAA-1250 / SPB7)</name>
    <dbReference type="NCBI Taxonomy" id="1016998"/>
    <lineage>
        <taxon>Bacteria</taxon>
        <taxon>Pseudomonadati</taxon>
        <taxon>Pseudomonadota</taxon>
        <taxon>Gammaproteobacteria</taxon>
        <taxon>Enterobacterales</taxon>
        <taxon>Enterobacteriaceae</taxon>
        <taxon>Salmonella</taxon>
    </lineage>
</organism>
<sequence>MLNPIVRKFQYGQHTVTLETGMMARQATAAVMVSMDDTAVFVTVVGQKKAKPGQDFFPLTVNYQERTYAAGRIPGSFFRREGRPSEGETLIARLIDRPVRPLFPEGFVNEVQVIATVVSVNPQVNPDIVAMIGASAALSLSGIPFNGPIGAARVGYINDQYVLNPTQDELKESKLDLVVAGTEAAVLMVESEAELLSEDTMLGAVVFGHEQQQVVIQAINDLVKEAGKPRWDWQPEAVNDALNARVAALAESRLSDAYRITDKQERYAQVDVIKSETIEQLIAEDETLDANELGEILHAIEKNVVRSRVLAGEPRIDGREKDMIRGLDVRTGVLPRTHGSALFTRGETQALVTATLGTARDAQVLDELMGERTDSFLFHYNFPPYSVGETGMVGSPKRREIGHGRLAKRGVLAVMPDMDKFPYTVRVVSEITESNGSSSMASVCGASLALMDAGVPIKAAVAGIAMGLVKEGDNYVVLSDILGDEDHLGDMDFKVAGSRDGISALQMDIKIEGITKEIMQVALNQAKGARLHILGVMEQAINAPRGDISEFAPRIHTIKISTDKIKDVIGKGGSVIRALTEETGTTIEIEDDGTVKIAATDGEKAKYAIRRIEEITAEIEVGRIYNGKVTRIVDFGAFVAIGGGKEGLVHISQIADKRVEKVTDYLQMGQEVPVKVLEVDRQGRVRLSIKEATEQSQPAAAPEAPASEQAE</sequence>
<gene>
    <name evidence="1" type="primary">pnp</name>
    <name type="ordered locus">SPAB_04093</name>
</gene>
<accession>A9N728</accession>
<reference key="1">
    <citation type="submission" date="2007-11" db="EMBL/GenBank/DDBJ databases">
        <authorList>
            <consortium name="The Salmonella enterica serovar Paratyphi B Genome Sequencing Project"/>
            <person name="McClelland M."/>
            <person name="Sanderson E.K."/>
            <person name="Porwollik S."/>
            <person name="Spieth J."/>
            <person name="Clifton W.S."/>
            <person name="Fulton R."/>
            <person name="Cordes M."/>
            <person name="Wollam A."/>
            <person name="Shah N."/>
            <person name="Pepin K."/>
            <person name="Bhonagiri V."/>
            <person name="Nash W."/>
            <person name="Johnson M."/>
            <person name="Thiruvilangam P."/>
            <person name="Wilson R."/>
        </authorList>
    </citation>
    <scope>NUCLEOTIDE SEQUENCE [LARGE SCALE GENOMIC DNA]</scope>
    <source>
        <strain>ATCC BAA-1250 / SPB7</strain>
    </source>
</reference>
<proteinExistence type="inferred from homology"/>
<evidence type="ECO:0000255" key="1">
    <source>
        <dbReference type="HAMAP-Rule" id="MF_01595"/>
    </source>
</evidence>
<evidence type="ECO:0000256" key="2">
    <source>
        <dbReference type="SAM" id="MobiDB-lite"/>
    </source>
</evidence>
<evidence type="ECO:0000305" key="3"/>